<dbReference type="EMBL" id="AP008226">
    <property type="protein sequence ID" value="BAD70187.1"/>
    <property type="molecule type" value="Genomic_DNA"/>
</dbReference>
<dbReference type="RefSeq" id="WP_011173991.1">
    <property type="nucleotide sequence ID" value="NC_006461.1"/>
</dbReference>
<dbReference type="RefSeq" id="YP_143630.1">
    <property type="nucleotide sequence ID" value="NC_006461.1"/>
</dbReference>
<dbReference type="PDB" id="5IT5">
    <property type="method" value="X-ray"/>
    <property type="resolution" value="2.65 A"/>
    <property type="chains" value="A/B/C/D/E/F=505-889"/>
</dbReference>
<dbReference type="PDB" id="5OIU">
    <property type="method" value="X-ray"/>
    <property type="resolution" value="2.44 A"/>
    <property type="chains" value="A/B/C/D/E/F=500-889"/>
</dbReference>
<dbReference type="PDB" id="6EJF">
    <property type="method" value="EM"/>
    <property type="resolution" value="8.00 A"/>
    <property type="chains" value="A/B/C/D/E/F=505-889, G/H/I/M/Q/R=330-475, J/K/L/N/O/P=163-299"/>
</dbReference>
<dbReference type="PDB" id="6F8L">
    <property type="method" value="EM"/>
    <property type="resolution" value="8.00 A"/>
    <property type="chains" value="A/B/C/D/E/F/G/H/I/J/K/L/M/N/O/P/Q/R=1-889"/>
</dbReference>
<dbReference type="PDB" id="8PDK">
    <property type="method" value="X-ray"/>
    <property type="resolution" value="2.00 A"/>
    <property type="chains" value="A/B=159-302"/>
</dbReference>
<dbReference type="PDB" id="8PE0">
    <property type="method" value="X-ray"/>
    <property type="resolution" value="1.90 A"/>
    <property type="chains" value="A/B=159-302"/>
</dbReference>
<dbReference type="PDB" id="8PFA">
    <property type="method" value="X-ray"/>
    <property type="resolution" value="1.80 A"/>
    <property type="chains" value="A/B=159-302"/>
</dbReference>
<dbReference type="PDB" id="8PQU">
    <property type="method" value="NMR"/>
    <property type="chains" value="A=157-302"/>
</dbReference>
<dbReference type="PDBsum" id="5IT5"/>
<dbReference type="PDBsum" id="5OIU"/>
<dbReference type="PDBsum" id="6EJF"/>
<dbReference type="PDBsum" id="6F8L"/>
<dbReference type="PDBsum" id="8PDK"/>
<dbReference type="PDBsum" id="8PE0"/>
<dbReference type="PDBsum" id="8PFA"/>
<dbReference type="PDBsum" id="8PQU"/>
<dbReference type="EMDB" id="EMD-3882"/>
<dbReference type="EMDB" id="EMD-4194"/>
<dbReference type="SMR" id="Q5SLC9"/>
<dbReference type="EnsemblBacteria" id="BAD70187">
    <property type="protein sequence ID" value="BAD70187"/>
    <property type="gene ID" value="BAD70187"/>
</dbReference>
<dbReference type="GeneID" id="3170115"/>
<dbReference type="KEGG" id="ttj:TTHA0364"/>
<dbReference type="PATRIC" id="fig|300852.9.peg.364"/>
<dbReference type="eggNOG" id="COG2804">
    <property type="taxonomic scope" value="Bacteria"/>
</dbReference>
<dbReference type="HOGENOM" id="CLU_013446_8_0_0"/>
<dbReference type="PhylomeDB" id="Q5SLC9"/>
<dbReference type="Proteomes" id="UP000000532">
    <property type="component" value="Chromosome"/>
</dbReference>
<dbReference type="GO" id="GO:0005737">
    <property type="term" value="C:cytoplasm"/>
    <property type="evidence" value="ECO:0007669"/>
    <property type="project" value="UniProtKB-SubCell"/>
</dbReference>
<dbReference type="GO" id="GO:0005886">
    <property type="term" value="C:plasma membrane"/>
    <property type="evidence" value="ECO:0007669"/>
    <property type="project" value="TreeGrafter"/>
</dbReference>
<dbReference type="GO" id="GO:0005524">
    <property type="term" value="F:ATP binding"/>
    <property type="evidence" value="ECO:0007669"/>
    <property type="project" value="UniProtKB-KW"/>
</dbReference>
<dbReference type="GO" id="GO:0016887">
    <property type="term" value="F:ATP hydrolysis activity"/>
    <property type="evidence" value="ECO:0007669"/>
    <property type="project" value="TreeGrafter"/>
</dbReference>
<dbReference type="GO" id="GO:0046872">
    <property type="term" value="F:metal ion binding"/>
    <property type="evidence" value="ECO:0007669"/>
    <property type="project" value="UniProtKB-KW"/>
</dbReference>
<dbReference type="CDD" id="cd01129">
    <property type="entry name" value="PulE-GspE-like"/>
    <property type="match status" value="1"/>
</dbReference>
<dbReference type="FunFam" id="3.40.50.300:FF:000398">
    <property type="entry name" value="Type IV pilus assembly ATPase PilB"/>
    <property type="match status" value="1"/>
</dbReference>
<dbReference type="Gene3D" id="1.10.40.70">
    <property type="match status" value="1"/>
</dbReference>
<dbReference type="Gene3D" id="3.30.450.90">
    <property type="match status" value="1"/>
</dbReference>
<dbReference type="Gene3D" id="3.40.50.300">
    <property type="entry name" value="P-loop containing nucleotide triphosphate hydrolases"/>
    <property type="match status" value="1"/>
</dbReference>
<dbReference type="Gene3D" id="3.30.300.160">
    <property type="entry name" value="Type II secretion system, protein E, N-terminal domain"/>
    <property type="match status" value="2"/>
</dbReference>
<dbReference type="InterPro" id="IPR027417">
    <property type="entry name" value="P-loop_NTPase"/>
</dbReference>
<dbReference type="InterPro" id="IPR001482">
    <property type="entry name" value="T2SS/T4SS_dom"/>
</dbReference>
<dbReference type="InterPro" id="IPR037257">
    <property type="entry name" value="T2SS_E_N_sf"/>
</dbReference>
<dbReference type="InterPro" id="IPR007831">
    <property type="entry name" value="T2SS_GspE_N"/>
</dbReference>
<dbReference type="PANTHER" id="PTHR30258:SF1">
    <property type="entry name" value="PROTEIN TRANSPORT PROTEIN HOFB HOMOLOG"/>
    <property type="match status" value="1"/>
</dbReference>
<dbReference type="PANTHER" id="PTHR30258">
    <property type="entry name" value="TYPE II SECRETION SYSTEM PROTEIN GSPE-RELATED"/>
    <property type="match status" value="1"/>
</dbReference>
<dbReference type="Pfam" id="PF05157">
    <property type="entry name" value="MshEN"/>
    <property type="match status" value="3"/>
</dbReference>
<dbReference type="Pfam" id="PF00437">
    <property type="entry name" value="T2SSE"/>
    <property type="match status" value="1"/>
</dbReference>
<dbReference type="SUPFAM" id="SSF160246">
    <property type="entry name" value="EspE N-terminal domain-like"/>
    <property type="match status" value="3"/>
</dbReference>
<dbReference type="SUPFAM" id="SSF52540">
    <property type="entry name" value="P-loop containing nucleoside triphosphate hydrolases"/>
    <property type="match status" value="1"/>
</dbReference>
<dbReference type="PROSITE" id="PS00662">
    <property type="entry name" value="T2SP_E"/>
    <property type="match status" value="1"/>
</dbReference>
<gene>
    <name type="primary">pilB</name>
    <name type="ordered locus">TTHA0364</name>
</gene>
<keyword id="KW-0002">3D-structure</keyword>
<keyword id="KW-0067">ATP-binding</keyword>
<keyword id="KW-0963">Cytoplasm</keyword>
<keyword id="KW-0479">Metal-binding</keyword>
<keyword id="KW-0547">Nucleotide-binding</keyword>
<keyword id="KW-1185">Reference proteome</keyword>
<keyword id="KW-0862">Zinc</keyword>
<comment type="function">
    <text evidence="1 2 3 4">ATPase component of the type IV pilus (T4P) that plays a role in surface and host cell adhesion, colonization, biofilm maturation, virulence, and twitching, a form of surface-associated motility facilitated by cycles of extension, adhesion, and retraction of T4P fibers (By similarity) (PubMed:29717025). Acts as a molecular motor to provide the energy that is required for biogenesis of the pilus and the extrusion of substrates generated in the cytoplasm (PubMed:27667690). PilB ATPase activity is also essential for T4P extension while antagonist PilT ATPase activity is required for T4P retraction (By similarity).</text>
</comment>
<comment type="subunit">
    <text evidence="1 3 4">Homohexamer (PubMed:27667690, PubMed:29717025). Interacts with PilC (By similarity).</text>
</comment>
<comment type="subcellular location">
    <subcellularLocation>
        <location evidence="1">Cytoplasm</location>
    </subcellularLocation>
    <text evidence="1">Displays polar localization.</text>
</comment>
<comment type="domain">
    <text evidence="1">The ATP-binding site is essential for assembly of pili.</text>
</comment>
<comment type="similarity">
    <text>Belongs to the GSP E family.</text>
</comment>
<evidence type="ECO:0000250" key="1">
    <source>
        <dbReference type="UniProtKB" id="P22608"/>
    </source>
</evidence>
<evidence type="ECO:0000250" key="2">
    <source>
        <dbReference type="UniProtKB" id="Q1D098"/>
    </source>
</evidence>
<evidence type="ECO:0000269" key="3">
    <source>
    </source>
</evidence>
<evidence type="ECO:0000269" key="4">
    <source>
    </source>
</evidence>
<evidence type="ECO:0007744" key="5">
    <source>
        <dbReference type="PDB" id="5IT5"/>
    </source>
</evidence>
<evidence type="ECO:0007744" key="6">
    <source>
        <dbReference type="PDB" id="5OIU"/>
    </source>
</evidence>
<evidence type="ECO:0007744" key="7">
    <source>
        <dbReference type="PDB" id="6EJF"/>
    </source>
</evidence>
<evidence type="ECO:0007744" key="8">
    <source>
        <dbReference type="PDB" id="6F8L"/>
    </source>
</evidence>
<evidence type="ECO:0007829" key="9">
    <source>
        <dbReference type="PDB" id="5IT5"/>
    </source>
</evidence>
<evidence type="ECO:0007829" key="10">
    <source>
        <dbReference type="PDB" id="5OIU"/>
    </source>
</evidence>
<evidence type="ECO:0007829" key="11">
    <source>
        <dbReference type="PDB" id="8PE0"/>
    </source>
</evidence>
<evidence type="ECO:0007829" key="12">
    <source>
        <dbReference type="PDB" id="8PFA"/>
    </source>
</evidence>
<organism>
    <name type="scientific">Thermus thermophilus (strain ATCC 27634 / DSM 579 / HB8)</name>
    <dbReference type="NCBI Taxonomy" id="300852"/>
    <lineage>
        <taxon>Bacteria</taxon>
        <taxon>Thermotogati</taxon>
        <taxon>Deinococcota</taxon>
        <taxon>Deinococci</taxon>
        <taxon>Thermales</taxon>
        <taxon>Thermaceae</taxon>
        <taxon>Thermus</taxon>
    </lineage>
</organism>
<reference key="1">
    <citation type="submission" date="2004-11" db="EMBL/GenBank/DDBJ databases">
        <title>Complete genome sequence of Thermus thermophilus HB8.</title>
        <authorList>
            <person name="Masui R."/>
            <person name="Kurokawa K."/>
            <person name="Nakagawa N."/>
            <person name="Tokunaga F."/>
            <person name="Koyama Y."/>
            <person name="Shibata T."/>
            <person name="Oshima T."/>
            <person name="Yokoyama S."/>
            <person name="Yasunaga T."/>
            <person name="Kuramitsu S."/>
        </authorList>
    </citation>
    <scope>NUCLEOTIDE SEQUENCE [LARGE SCALE GENOMIC DNA]</scope>
    <source>
        <strain>ATCC 27634 / DSM 579 / HB8</strain>
    </source>
</reference>
<reference key="2">
    <citation type="journal article" date="2018" name="Biochem. J.">
        <title>The type IV pilus assembly motor PilB is a robust hexameric ATPase with complex kinetics.</title>
        <authorList>
            <person name="Sukmana A."/>
            <person name="Yang Z."/>
        </authorList>
    </citation>
    <scope>FUNCTION</scope>
    <scope>SUBUNIT</scope>
</reference>
<reference evidence="5" key="3">
    <citation type="journal article" date="2016" name="Structure">
        <title>Crystal Structure of a Type IV Pilus Assembly ATPase: Insights into the Molecular Mechanism of PilB from Thermus thermophilus.</title>
        <authorList>
            <person name="Mancl J.M."/>
            <person name="Black W.P."/>
            <person name="Robinson H."/>
            <person name="Yang Z."/>
            <person name="Schubot F.D."/>
        </authorList>
    </citation>
    <scope>X-RAY CRYSTALLOGRAPHY (2.65 ANGSTROMS) OF 505-889 IN COMPLEX WITH ATP AND ZINC</scope>
    <scope>FUNCTION</scope>
    <scope>SUBUNIT</scope>
</reference>
<reference evidence="6 7 8" key="4">
    <citation type="journal article" date="2018" name="Sci. Rep.">
        <title>Structural cycle of the Thermus thermophilus PilF ATPase: the powering of type IVa pilus assembly.</title>
        <authorList>
            <person name="Collins R."/>
            <person name="Karuppiah V."/>
            <person name="Siebert C.A."/>
            <person name="Dajani R."/>
            <person name="Thistlethwaite A."/>
            <person name="Derrick J.P."/>
        </authorList>
    </citation>
    <scope>STRUCTURE BY ELECTRON MICROSCOPY (8.00 ANGSTROMS)</scope>
</reference>
<protein>
    <recommendedName>
        <fullName>Type IV pilus assembly ATPase PilB</fullName>
    </recommendedName>
</protein>
<name>PILB_THET8</name>
<proteinExistence type="evidence at protein level"/>
<sequence length="889" mass="98213">MSVLTIGDKRLGAALLDAGLLTDEELQRALERHREVGGSLAEVLVDMGLLSERRIAQTIEDRFGIPLVELHRVEIPPKVKALLPAEKAKELKAIPFALDEEAGVVRVAFLNPLDTLSLEEVEDLTGLVVEPYQTTKSAFLYALAKHYPELGLPVPPPPSGEGQKDLKLGELLLQKGWISREALEEALVEQEKTGDLLGRILVRKGLPEEALYRALAEQKGLEFLESTEGIVPDPSAALLLLRSDALRYGAVPIGFQNGEVEVVLSDPRHKEAVAQLLNRPARFYLALPQAWEELFRRAYPQKNRLGEVLVQEGKLSREALKEALEVQKGLPRAKPLGEILVELGLARPEDVEEALQKQRRGGGRLEDTLVQSGKLRPEALAQAVATQLGYPYVDPEEDPPDPGAPLLLPEDLCRRYGVFPHRLEGNRLVLLMKDPRNILALDDVRLALKRKGLNYEVAPAVATEAAITKLIERFYGKAELSEIAKEFAKKQAEEEVPSPLELDESAAQKFVKQVIREAFLQDASDIHIEPRQNDVQVRLRIDGALRPYSTLPKGALNAVISVVKIMGGLNIAEKRLPQDGRVRYREGAIDVDLRLSTLPTVYGEKAVMRLLKKASDIPEIEDLGFAPGVFERFKEVISKPYGIFLITGPTGSGKSFTTFSILKRIATPDKNTQTIEDPVEYEIPGINQTQVNPQAGLTFARALRAFLRQDPDIIMVGEIRDSETAKIATEAALTGHLVIATLHTNDAAQAITRLDEMGVEPFNISAALIGVLSQRLVRRVCEHCKVEVKPDPETLRRLGLSEAEIQGARLYKGMGCERCGGTGYKGRYAIHELLVVDDEIRHAIVAGKSATEIKEIARRKGMKTLREDGLYKALQGITTLEEVLARTIE</sequence>
<feature type="chain" id="PRO_0000450082" description="Type IV pilus assembly ATPase PilB">
    <location>
        <begin position="1"/>
        <end position="889"/>
    </location>
</feature>
<feature type="binding site" evidence="3 5">
    <location>
        <begin position="651"/>
        <end position="656"/>
    </location>
    <ligand>
        <name>ATP</name>
        <dbReference type="ChEBI" id="CHEBI:30616"/>
    </ligand>
</feature>
<feature type="binding site" evidence="3 5">
    <location>
        <position position="781"/>
    </location>
    <ligand>
        <name>Zn(2+)</name>
        <dbReference type="ChEBI" id="CHEBI:29105"/>
    </ligand>
</feature>
<feature type="binding site" evidence="3 5">
    <location>
        <position position="784"/>
    </location>
    <ligand>
        <name>Zn(2+)</name>
        <dbReference type="ChEBI" id="CHEBI:29105"/>
    </ligand>
</feature>
<feature type="binding site" evidence="3 5">
    <location>
        <position position="816"/>
    </location>
    <ligand>
        <name>Zn(2+)</name>
        <dbReference type="ChEBI" id="CHEBI:29105"/>
    </ligand>
</feature>
<feature type="binding site" evidence="3 5">
    <location>
        <position position="819"/>
    </location>
    <ligand>
        <name>Zn(2+)</name>
        <dbReference type="ChEBI" id="CHEBI:29105"/>
    </ligand>
</feature>
<feature type="helix" evidence="11">
    <location>
        <begin position="162"/>
        <end position="165"/>
    </location>
</feature>
<feature type="helix" evidence="12">
    <location>
        <begin position="168"/>
        <end position="175"/>
    </location>
</feature>
<feature type="helix" evidence="12">
    <location>
        <begin position="180"/>
        <end position="193"/>
    </location>
</feature>
<feature type="helix" evidence="12">
    <location>
        <begin position="197"/>
        <end position="203"/>
    </location>
</feature>
<feature type="helix" evidence="12">
    <location>
        <begin position="208"/>
        <end position="218"/>
    </location>
</feature>
<feature type="strand" evidence="12">
    <location>
        <begin position="222"/>
        <end position="225"/>
    </location>
</feature>
<feature type="helix" evidence="12">
    <location>
        <begin position="234"/>
        <end position="237"/>
    </location>
</feature>
<feature type="helix" evidence="12">
    <location>
        <begin position="242"/>
        <end position="248"/>
    </location>
</feature>
<feature type="strand" evidence="12">
    <location>
        <begin position="250"/>
        <end position="256"/>
    </location>
</feature>
<feature type="strand" evidence="12">
    <location>
        <begin position="259"/>
        <end position="265"/>
    </location>
</feature>
<feature type="helix" evidence="12">
    <location>
        <begin position="267"/>
        <end position="269"/>
    </location>
</feature>
<feature type="helix" evidence="12">
    <location>
        <begin position="270"/>
        <end position="277"/>
    </location>
</feature>
<feature type="strand" evidence="12">
    <location>
        <begin position="281"/>
        <end position="286"/>
    </location>
</feature>
<feature type="helix" evidence="12">
    <location>
        <begin position="288"/>
        <end position="298"/>
    </location>
</feature>
<feature type="helix" evidence="10">
    <location>
        <begin position="506"/>
        <end position="521"/>
    </location>
</feature>
<feature type="strand" evidence="10">
    <location>
        <begin position="524"/>
        <end position="530"/>
    </location>
</feature>
<feature type="strand" evidence="10">
    <location>
        <begin position="532"/>
        <end position="541"/>
    </location>
</feature>
<feature type="strand" evidence="10">
    <location>
        <begin position="544"/>
        <end position="552"/>
    </location>
</feature>
<feature type="helix" evidence="10">
    <location>
        <begin position="553"/>
        <end position="555"/>
    </location>
</feature>
<feature type="helix" evidence="10">
    <location>
        <begin position="556"/>
        <end position="566"/>
    </location>
</feature>
<feature type="strand" evidence="10">
    <location>
        <begin position="578"/>
        <end position="586"/>
    </location>
</feature>
<feature type="strand" evidence="10">
    <location>
        <begin position="589"/>
        <end position="600"/>
    </location>
</feature>
<feature type="strand" evidence="10">
    <location>
        <begin position="603"/>
        <end position="611"/>
    </location>
</feature>
<feature type="helix" evidence="10">
    <location>
        <begin position="614"/>
        <end position="616"/>
    </location>
</feature>
<feature type="helix" evidence="10">
    <location>
        <begin position="620"/>
        <end position="622"/>
    </location>
</feature>
<feature type="helix" evidence="10">
    <location>
        <begin position="627"/>
        <end position="637"/>
    </location>
</feature>
<feature type="strand" evidence="10">
    <location>
        <begin position="640"/>
        <end position="647"/>
    </location>
</feature>
<feature type="strand" evidence="9">
    <location>
        <begin position="649"/>
        <end position="653"/>
    </location>
</feature>
<feature type="helix" evidence="10">
    <location>
        <begin position="654"/>
        <end position="665"/>
    </location>
</feature>
<feature type="strand" evidence="10">
    <location>
        <begin position="672"/>
        <end position="678"/>
    </location>
</feature>
<feature type="strand" evidence="10">
    <location>
        <begin position="686"/>
        <end position="690"/>
    </location>
</feature>
<feature type="turn" evidence="10">
    <location>
        <begin position="693"/>
        <end position="696"/>
    </location>
</feature>
<feature type="helix" evidence="10">
    <location>
        <begin position="699"/>
        <end position="706"/>
    </location>
</feature>
<feature type="strand" evidence="10">
    <location>
        <begin position="712"/>
        <end position="717"/>
    </location>
</feature>
<feature type="helix" evidence="10">
    <location>
        <begin position="722"/>
        <end position="734"/>
    </location>
</feature>
<feature type="strand" evidence="10">
    <location>
        <begin position="737"/>
        <end position="742"/>
    </location>
</feature>
<feature type="strand" evidence="10">
    <location>
        <begin position="745"/>
        <end position="747"/>
    </location>
</feature>
<feature type="helix" evidence="10">
    <location>
        <begin position="748"/>
        <end position="756"/>
    </location>
</feature>
<feature type="helix" evidence="10">
    <location>
        <begin position="761"/>
        <end position="767"/>
    </location>
</feature>
<feature type="strand" evidence="10">
    <location>
        <begin position="768"/>
        <end position="780"/>
    </location>
</feature>
<feature type="strand" evidence="10">
    <location>
        <begin position="782"/>
        <end position="788"/>
    </location>
</feature>
<feature type="helix" evidence="10">
    <location>
        <begin position="792"/>
        <end position="797"/>
    </location>
</feature>
<feature type="helix" evidence="10">
    <location>
        <begin position="802"/>
        <end position="805"/>
    </location>
</feature>
<feature type="strand" evidence="10">
    <location>
        <begin position="810"/>
        <end position="813"/>
    </location>
</feature>
<feature type="helix" evidence="10">
    <location>
        <begin position="817"/>
        <end position="819"/>
    </location>
</feature>
<feature type="strand" evidence="10">
    <location>
        <begin position="822"/>
        <end position="835"/>
    </location>
</feature>
<feature type="helix" evidence="10">
    <location>
        <begin position="838"/>
        <end position="845"/>
    </location>
</feature>
<feature type="helix" evidence="10">
    <location>
        <begin position="850"/>
        <end position="859"/>
    </location>
</feature>
<feature type="helix" evidence="10">
    <location>
        <begin position="865"/>
        <end position="873"/>
    </location>
</feature>
<feature type="turn" evidence="10">
    <location>
        <begin position="874"/>
        <end position="876"/>
    </location>
</feature>
<feature type="helix" evidence="10">
    <location>
        <begin position="880"/>
        <end position="886"/>
    </location>
</feature>
<accession>Q5SLC9</accession>